<evidence type="ECO:0000250" key="1">
    <source>
        <dbReference type="UniProtKB" id="O60814"/>
    </source>
</evidence>
<evidence type="ECO:0000250" key="2">
    <source>
        <dbReference type="UniProtKB" id="P23527"/>
    </source>
</evidence>
<evidence type="ECO:0000250" key="3">
    <source>
        <dbReference type="UniProtKB" id="P33778"/>
    </source>
</evidence>
<evidence type="ECO:0000250" key="4">
    <source>
        <dbReference type="UniProtKB" id="P58876"/>
    </source>
</evidence>
<evidence type="ECO:0000250" key="5">
    <source>
        <dbReference type="UniProtKB" id="P62807"/>
    </source>
</evidence>
<evidence type="ECO:0000250" key="6">
    <source>
        <dbReference type="UniProtKB" id="Q00729"/>
    </source>
</evidence>
<evidence type="ECO:0000250" key="7">
    <source>
        <dbReference type="UniProtKB" id="Q2M2T1"/>
    </source>
</evidence>
<evidence type="ECO:0000250" key="8">
    <source>
        <dbReference type="UniProtKB" id="Q5QNW6"/>
    </source>
</evidence>
<evidence type="ECO:0000250" key="9">
    <source>
        <dbReference type="UniProtKB" id="Q64475"/>
    </source>
</evidence>
<evidence type="ECO:0000250" key="10">
    <source>
        <dbReference type="UniProtKB" id="Q6ZWY9"/>
    </source>
</evidence>
<evidence type="ECO:0000250" key="11">
    <source>
        <dbReference type="UniProtKB" id="Q8CGP1"/>
    </source>
</evidence>
<evidence type="ECO:0000250" key="12">
    <source>
        <dbReference type="UniProtKB" id="Q96A08"/>
    </source>
</evidence>
<evidence type="ECO:0000256" key="13">
    <source>
        <dbReference type="SAM" id="MobiDB-lite"/>
    </source>
</evidence>
<evidence type="ECO:0000305" key="14"/>
<gene>
    <name evidence="1" type="primary">H2BC12</name>
    <name type="ORF">QflA-14990</name>
</gene>
<dbReference type="EMBL" id="AB220463">
    <property type="protein sequence ID" value="BAE72996.1"/>
    <property type="molecule type" value="mRNA"/>
</dbReference>
<dbReference type="SMR" id="Q2PFX4"/>
<dbReference type="STRING" id="9541.ENSMFAP00000010642"/>
<dbReference type="GlyCosmos" id="Q2PFX4">
    <property type="glycosylation" value="1 site, No reported glycans"/>
</dbReference>
<dbReference type="eggNOG" id="KOG1744">
    <property type="taxonomic scope" value="Eukaryota"/>
</dbReference>
<dbReference type="Proteomes" id="UP000233100">
    <property type="component" value="Unplaced"/>
</dbReference>
<dbReference type="GO" id="GO:0000786">
    <property type="term" value="C:nucleosome"/>
    <property type="evidence" value="ECO:0007669"/>
    <property type="project" value="UniProtKB-KW"/>
</dbReference>
<dbReference type="GO" id="GO:0005634">
    <property type="term" value="C:nucleus"/>
    <property type="evidence" value="ECO:0007669"/>
    <property type="project" value="UniProtKB-SubCell"/>
</dbReference>
<dbReference type="GO" id="GO:0003677">
    <property type="term" value="F:DNA binding"/>
    <property type="evidence" value="ECO:0007669"/>
    <property type="project" value="UniProtKB-KW"/>
</dbReference>
<dbReference type="GO" id="GO:0046982">
    <property type="term" value="F:protein heterodimerization activity"/>
    <property type="evidence" value="ECO:0007669"/>
    <property type="project" value="InterPro"/>
</dbReference>
<dbReference type="GO" id="GO:0030527">
    <property type="term" value="F:structural constituent of chromatin"/>
    <property type="evidence" value="ECO:0007669"/>
    <property type="project" value="InterPro"/>
</dbReference>
<dbReference type="CDD" id="cd22910">
    <property type="entry name" value="HFD_H2B"/>
    <property type="match status" value="1"/>
</dbReference>
<dbReference type="FunFam" id="1.10.20.10:FF:000003">
    <property type="entry name" value="Histone H2B"/>
    <property type="match status" value="1"/>
</dbReference>
<dbReference type="Gene3D" id="1.10.20.10">
    <property type="entry name" value="Histone, subunit A"/>
    <property type="match status" value="1"/>
</dbReference>
<dbReference type="InterPro" id="IPR009072">
    <property type="entry name" value="Histone-fold"/>
</dbReference>
<dbReference type="InterPro" id="IPR007125">
    <property type="entry name" value="Histone_H2A/H2B/H3"/>
</dbReference>
<dbReference type="InterPro" id="IPR000558">
    <property type="entry name" value="Histone_H2B"/>
</dbReference>
<dbReference type="InterPro" id="IPR055333">
    <property type="entry name" value="HISTONE_H2B_site"/>
</dbReference>
<dbReference type="PANTHER" id="PTHR23428">
    <property type="entry name" value="HISTONE H2B"/>
    <property type="match status" value="1"/>
</dbReference>
<dbReference type="Pfam" id="PF00125">
    <property type="entry name" value="Histone"/>
    <property type="match status" value="1"/>
</dbReference>
<dbReference type="PRINTS" id="PR00621">
    <property type="entry name" value="HISTONEH2B"/>
</dbReference>
<dbReference type="SMART" id="SM00427">
    <property type="entry name" value="H2B"/>
    <property type="match status" value="1"/>
</dbReference>
<dbReference type="SUPFAM" id="SSF47113">
    <property type="entry name" value="Histone-fold"/>
    <property type="match status" value="1"/>
</dbReference>
<dbReference type="PROSITE" id="PS00357">
    <property type="entry name" value="HISTONE_H2B"/>
    <property type="match status" value="1"/>
</dbReference>
<keyword id="KW-0007">Acetylation</keyword>
<keyword id="KW-0013">ADP-ribosylation</keyword>
<keyword id="KW-0158">Chromosome</keyword>
<keyword id="KW-0238">DNA-binding</keyword>
<keyword id="KW-0325">Glycoprotein</keyword>
<keyword id="KW-0379">Hydroxylation</keyword>
<keyword id="KW-1017">Isopeptide bond</keyword>
<keyword id="KW-0488">Methylation</keyword>
<keyword id="KW-0544">Nucleosome core</keyword>
<keyword id="KW-0539">Nucleus</keyword>
<keyword id="KW-0597">Phosphoprotein</keyword>
<keyword id="KW-1185">Reference proteome</keyword>
<keyword id="KW-0832">Ubl conjugation</keyword>
<organism>
    <name type="scientific">Macaca fascicularis</name>
    <name type="common">Crab-eating macaque</name>
    <name type="synonym">Cynomolgus monkey</name>
    <dbReference type="NCBI Taxonomy" id="9541"/>
    <lineage>
        <taxon>Eukaryota</taxon>
        <taxon>Metazoa</taxon>
        <taxon>Chordata</taxon>
        <taxon>Craniata</taxon>
        <taxon>Vertebrata</taxon>
        <taxon>Euteleostomi</taxon>
        <taxon>Mammalia</taxon>
        <taxon>Eutheria</taxon>
        <taxon>Euarchontoglires</taxon>
        <taxon>Primates</taxon>
        <taxon>Haplorrhini</taxon>
        <taxon>Catarrhini</taxon>
        <taxon>Cercopithecidae</taxon>
        <taxon>Cercopithecinae</taxon>
        <taxon>Macaca</taxon>
    </lineage>
</organism>
<name>H2B1K_MACFA</name>
<feature type="initiator methionine" description="Removed" evidence="2">
    <location>
        <position position="1"/>
    </location>
</feature>
<feature type="chain" id="PRO_0000244829" description="Histone H2B type 1-K">
    <location>
        <begin position="2"/>
        <end position="126"/>
    </location>
</feature>
<feature type="region of interest" description="Disordered" evidence="13">
    <location>
        <begin position="1"/>
        <end position="36"/>
    </location>
</feature>
<feature type="compositionally biased region" description="Low complexity" evidence="13">
    <location>
        <begin position="1"/>
        <end position="12"/>
    </location>
</feature>
<feature type="modified residue" description="N-acetylproline" evidence="2">
    <location>
        <position position="2"/>
    </location>
</feature>
<feature type="modified residue" description="ADP-ribosyl glutamic acid" evidence="3">
    <location>
        <position position="3"/>
    </location>
</feature>
<feature type="modified residue" description="N6-(2-hydroxyisobutyryl)lysine; alternate" evidence="3">
    <location>
        <position position="6"/>
    </location>
</feature>
<feature type="modified residue" description="N6-(beta-hydroxybutyryl)lysine; alternate" evidence="9">
    <location>
        <position position="6"/>
    </location>
</feature>
<feature type="modified residue" description="N6-acetyllysine; alternate" evidence="1">
    <location>
        <position position="6"/>
    </location>
</feature>
<feature type="modified residue" description="N6-butyryllysine; alternate" evidence="3">
    <location>
        <position position="6"/>
    </location>
</feature>
<feature type="modified residue" description="N6-crotonyllysine; alternate" evidence="3">
    <location>
        <position position="6"/>
    </location>
</feature>
<feature type="modified residue" description="N6-lactoyllysine; alternate" evidence="3">
    <location>
        <position position="6"/>
    </location>
</feature>
<feature type="modified residue" description="ADP-ribosylserine" evidence="3">
    <location>
        <position position="7"/>
    </location>
</feature>
<feature type="modified residue" description="N6-(beta-hydroxybutyryl)lysine; alternate" evidence="9">
    <location>
        <position position="12"/>
    </location>
</feature>
<feature type="modified residue" description="N6-acetyllysine; alternate" evidence="1">
    <location>
        <position position="12"/>
    </location>
</feature>
<feature type="modified residue" description="N6-crotonyllysine; alternate" evidence="3">
    <location>
        <position position="12"/>
    </location>
</feature>
<feature type="modified residue" description="N6-lactoyllysine; alternate" evidence="3">
    <location>
        <position position="12"/>
    </location>
</feature>
<feature type="modified residue" description="N6-(2-hydroxyisobutyryl)lysine; alternate" evidence="3">
    <location>
        <position position="13"/>
    </location>
</feature>
<feature type="modified residue" description="N6-acetyllysine; alternate" evidence="1">
    <location>
        <position position="13"/>
    </location>
</feature>
<feature type="modified residue" description="N6-crotonyllysine; alternate" evidence="3">
    <location>
        <position position="13"/>
    </location>
</feature>
<feature type="modified residue" description="Phosphoserine; by STK4/MST1" evidence="1">
    <location>
        <position position="15"/>
    </location>
</feature>
<feature type="modified residue" description="N6-acetyllysine; alternate" evidence="1">
    <location>
        <position position="16"/>
    </location>
</feature>
<feature type="modified residue" description="N6-crotonyllysine; alternate" evidence="3">
    <location>
        <position position="16"/>
    </location>
</feature>
<feature type="modified residue" description="N6-lactoyllysine; alternate" evidence="3">
    <location>
        <position position="16"/>
    </location>
</feature>
<feature type="modified residue" description="N6-acetyllysine; alternate" evidence="1">
    <location>
        <position position="17"/>
    </location>
</feature>
<feature type="modified residue" description="N6-crotonyllysine; alternate" evidence="3">
    <location>
        <position position="17"/>
    </location>
</feature>
<feature type="modified residue" description="N6-glutaryllysine; alternate" evidence="3">
    <location>
        <position position="17"/>
    </location>
</feature>
<feature type="modified residue" description="N6-lactoyllysine; alternate" evidence="3">
    <location>
        <position position="17"/>
    </location>
</feature>
<feature type="modified residue" description="N6-(2-hydroxyisobutyryl)lysine; alternate" evidence="3">
    <location>
        <position position="21"/>
    </location>
</feature>
<feature type="modified residue" description="N6-(beta-hydroxybutyryl)lysine; alternate" evidence="9">
    <location>
        <position position="21"/>
    </location>
</feature>
<feature type="modified residue" description="N6-acetyllysine; alternate" evidence="1">
    <location>
        <position position="21"/>
    </location>
</feature>
<feature type="modified residue" description="N6-butyryllysine; alternate" evidence="3">
    <location>
        <position position="21"/>
    </location>
</feature>
<feature type="modified residue" description="N6-crotonyllysine; alternate" evidence="3">
    <location>
        <position position="21"/>
    </location>
</feature>
<feature type="modified residue" description="N6-lactoyllysine; alternate" evidence="3">
    <location>
        <position position="21"/>
    </location>
</feature>
<feature type="modified residue" description="N6-(2-hydroxyisobutyryl)lysine; alternate" evidence="3">
    <location>
        <position position="24"/>
    </location>
</feature>
<feature type="modified residue" description="N6-acetyllysine; alternate" evidence="3">
    <location>
        <position position="24"/>
    </location>
</feature>
<feature type="modified residue" description="N6-crotonyllysine; alternate" evidence="3">
    <location>
        <position position="24"/>
    </location>
</feature>
<feature type="modified residue" description="N6-lactoyllysine; alternate" evidence="3">
    <location>
        <position position="24"/>
    </location>
</feature>
<feature type="modified residue" description="N6-(2-hydroxyisobutyryl)lysine" evidence="3">
    <location>
        <position position="25"/>
    </location>
</feature>
<feature type="modified residue" description="N6-(2-hydroxyisobutyryl)lysine; alternate" evidence="3">
    <location>
        <position position="35"/>
    </location>
</feature>
<feature type="modified residue" description="N6-(beta-hydroxybutyryl)lysine; alternate" evidence="9">
    <location>
        <position position="35"/>
    </location>
</feature>
<feature type="modified residue" description="N6-crotonyllysine; alternate" evidence="3">
    <location>
        <position position="35"/>
    </location>
</feature>
<feature type="modified residue" description="N6-glutaryllysine; alternate" evidence="3">
    <location>
        <position position="35"/>
    </location>
</feature>
<feature type="modified residue" description="N6-succinyllysine; alternate" evidence="1">
    <location>
        <position position="35"/>
    </location>
</feature>
<feature type="modified residue" description="PolyADP-ribosyl glutamic acid" evidence="9">
    <location>
        <position position="36"/>
    </location>
</feature>
<feature type="modified residue" description="Phosphoserine; by AMPK" evidence="11">
    <location>
        <position position="37"/>
    </location>
</feature>
<feature type="modified residue" description="N6-(2-hydroxyisobutyryl)lysine; alternate" evidence="3">
    <location>
        <position position="44"/>
    </location>
</feature>
<feature type="modified residue" description="N6-glutaryllysine; alternate" evidence="3">
    <location>
        <position position="44"/>
    </location>
</feature>
<feature type="modified residue" description="N6-lactoyllysine; alternate" evidence="3">
    <location>
        <position position="44"/>
    </location>
</feature>
<feature type="modified residue" description="N6-(2-hydroxyisobutyryl)lysine; alternate" evidence="3">
    <location>
        <position position="47"/>
    </location>
</feature>
<feature type="modified residue" description="N6-glutaryllysine; alternate" evidence="3">
    <location>
        <position position="47"/>
    </location>
</feature>
<feature type="modified residue" description="N6-methyllysine; alternate" evidence="1">
    <location>
        <position position="47"/>
    </location>
</feature>
<feature type="modified residue" description="N6,N6-dimethyllysine; alternate" evidence="1">
    <location>
        <position position="58"/>
    </location>
</feature>
<feature type="modified residue" description="N6-(2-hydroxyisobutyryl)lysine; alternate" evidence="3">
    <location>
        <position position="58"/>
    </location>
</feature>
<feature type="modified residue" description="Dimethylated arginine" evidence="12">
    <location>
        <position position="80"/>
    </location>
</feature>
<feature type="modified residue" description="N6,N6,N6-trimethyllysine; alternate" evidence="12">
    <location>
        <position position="86"/>
    </location>
</feature>
<feature type="modified residue" description="N6-(2-hydroxyisobutyryl)lysine; alternate" evidence="3">
    <location>
        <position position="86"/>
    </location>
</feature>
<feature type="modified residue" description="N6-acetyllysine; alternate" evidence="12">
    <location>
        <position position="86"/>
    </location>
</feature>
<feature type="modified residue" description="N6-lactoyllysine; alternate" evidence="3">
    <location>
        <position position="86"/>
    </location>
</feature>
<feature type="modified residue" description="Omega-N-methylarginine" evidence="12">
    <location>
        <position position="87"/>
    </location>
</feature>
<feature type="modified residue" description="Omega-N-methylarginine" evidence="12">
    <location>
        <position position="93"/>
    </location>
</feature>
<feature type="modified residue" description="N6-(2-hydroxyisobutyryl)lysine; alternate" evidence="3">
    <location>
        <position position="109"/>
    </location>
</feature>
<feature type="modified residue" description="N6-glutaryllysine; alternate" evidence="3">
    <location>
        <position position="109"/>
    </location>
</feature>
<feature type="modified residue" description="N6-lactoyllysine; alternate" evidence="3">
    <location>
        <position position="109"/>
    </location>
</feature>
<feature type="modified residue" description="N6-methyllysine; alternate" evidence="1">
    <location>
        <position position="109"/>
    </location>
</feature>
<feature type="modified residue" description="Phosphothreonine" evidence="6">
    <location>
        <position position="116"/>
    </location>
</feature>
<feature type="modified residue" description="N6-(2-hydroxyisobutyryl)lysine; alternate" evidence="3">
    <location>
        <position position="117"/>
    </location>
</feature>
<feature type="modified residue" description="N6-(beta-hydroxybutyryl)lysine; alternate" evidence="9">
    <location>
        <position position="117"/>
    </location>
</feature>
<feature type="modified residue" description="N6-glutaryllysine; alternate" evidence="3">
    <location>
        <position position="117"/>
    </location>
</feature>
<feature type="modified residue" description="N6-lactoyllysine; alternate" evidence="3">
    <location>
        <position position="117"/>
    </location>
</feature>
<feature type="modified residue" description="N6-methylated lysine; alternate" evidence="6">
    <location>
        <position position="117"/>
    </location>
</feature>
<feature type="modified residue" description="N6-succinyllysine; alternate" evidence="1">
    <location>
        <position position="117"/>
    </location>
</feature>
<feature type="modified residue" description="N6-(2-hydroxyisobutyryl)lysine; alternate" evidence="3">
    <location>
        <position position="121"/>
    </location>
</feature>
<feature type="modified residue" description="N6-glutaryllysine; alternate" evidence="3">
    <location>
        <position position="121"/>
    </location>
</feature>
<feature type="modified residue" description="N6-lactoyllysine; alternate" evidence="3">
    <location>
        <position position="121"/>
    </location>
</feature>
<feature type="modified residue" description="N6-succinyllysine; alternate" evidence="1">
    <location>
        <position position="121"/>
    </location>
</feature>
<feature type="glycosylation site" description="O-linked (GlcNAc) serine" evidence="5">
    <location>
        <position position="113"/>
    </location>
</feature>
<feature type="cross-link" description="Glycyl lysine isopeptide (Lys-Gly) (interchain with G-Cter in SUMO2); alternate" evidence="4">
    <location>
        <position position="6"/>
    </location>
</feature>
<feature type="cross-link" description="Glycyl lysine isopeptide (Lys-Gly) (interchain with G-Cter in SUMO2); alternate" evidence="8">
    <location>
        <position position="21"/>
    </location>
</feature>
<feature type="cross-link" description="Glycyl lysine isopeptide (Lys-Gly) (interchain with G-Cter in ubiquitin); alternate" evidence="1">
    <location>
        <position position="35"/>
    </location>
</feature>
<feature type="cross-link" description="Glycyl lysine isopeptide (Lys-Gly) (interchain with G-Cter in ubiquitin); alternate" evidence="7">
    <location>
        <position position="121"/>
    </location>
</feature>
<reference key="1">
    <citation type="submission" date="2005-07" db="EMBL/GenBank/DDBJ databases">
        <title>DNA sequences of macaque genes expressed in brain or testis and its evolutionary implications.</title>
        <authorList>
            <consortium name="International consortium for macaque cDNA sequencing and analysis"/>
        </authorList>
    </citation>
    <scope>NUCLEOTIDE SEQUENCE [LARGE SCALE MRNA]</scope>
    <source>
        <tissue>Frontal cortex</tissue>
    </source>
</reference>
<comment type="function">
    <text>Core component of nucleosome. Nucleosomes wrap and compact DNA into chromatin, limiting DNA accessibility to the cellular machineries which require DNA as a template. Histones thereby play a central role in transcription regulation, DNA repair, DNA replication and chromosomal stability. DNA accessibility is regulated via a complex set of post-translational modifications of histones, also called histone code, and nucleosome remodeling.</text>
</comment>
<comment type="subunit">
    <text>The nucleosome is a histone octamer containing two molecules each of H2A, H2B, H3 and H4 assembled in one H3-H4 heterotetramer and two H2A-H2B heterodimers. The octamer wraps approximately 147 bp of DNA.</text>
</comment>
<comment type="subcellular location">
    <subcellularLocation>
        <location>Nucleus</location>
    </subcellularLocation>
    <subcellularLocation>
        <location>Chromosome</location>
    </subcellularLocation>
</comment>
<comment type="PTM">
    <text evidence="3">Monoubiquitination at Lys-35 (H2BK34Ub) by the MSL1/MSL2 dimer is required for histone H3 'Lys-4' (H3K4me) and 'Lys-79' (H3K79me) methylation and transcription activation at specific gene loci, such as HOXA9 and MEIS1 loci. Similarly, monoubiquitination at Lys-121 (H2BK120Ub) by the RNF20/40 complex gives a specific tag for epigenetic transcriptional activation and is also prerequisite for histone H3 'Lys-4' and 'Lys-79' methylation. It also functions cooperatively with the FACT dimer to stimulate elongation by RNA polymerase II. H2BK120Ub also acts as a regulator of mRNA splicing: deubiquitination by USP49 is required for efficient cotranscriptional splicing of a large set of exons (By similarity).</text>
</comment>
<comment type="PTM">
    <text evidence="3 9">Phosphorylated on Ser-15 (H2BS14ph) by STK4/MST1 during apoptosis; which facilitates apoptotic chromatin condensation. Also phosphorylated on Ser-15 in response to DNA double strand breaks (DSBs), and in correlation with somatic hypermutation and immunoglobulin class-switch recombination. Phosphorylation at Ser-37 (H2BS36ph) by AMPK in response to stress promotes transcription (By similarity).</text>
</comment>
<comment type="PTM">
    <text evidence="5">GlcNAcylation at Ser-113 promotes monoubiquitination of Lys-121. It fluctuates in response to extracellular glucose, and associates with transcribed genes (By similarity).</text>
</comment>
<comment type="PTM">
    <text evidence="3 10">ADP-ribosylated by PARP1 or PARP2 on Ser-7 (H2BS6ADPr) in response to DNA damage (By similarity). H2BS6ADPr promotes recruitment of CHD1L (By similarity). Mono-ADP-ribosylated on Glu-3 (H2BE2ADPr) by PARP3 in response to single-strand breaks (By similarity). Poly ADP-ribosylation on Glu-36 (H2BE35ADPr) by PARP1 regulates adipogenesis: it inhibits phosphorylation at Ser-37 (H2BS36ph), thereby blocking expression of pro-adipogenetic genes (By similarity).</text>
</comment>
<comment type="PTM">
    <text evidence="3">Crotonylation (Kcr) is specifically present in male germ cells and marks testis-specific genes in post-meiotic cells, including X-linked genes that escape sex chromosome inactivation in haploid cells. Crotonylation marks active promoters and enhancers and confers resistance to transcriptional repressors. It is also associated with post-meiotically activated genes on autosomes (By similarity).</text>
</comment>
<comment type="PTM">
    <text evidence="3">Lactylated in macrophages by EP300/P300 by using lactoyl-CoA directly derived from endogenous or exogenous lactate, leading to stimulates gene transcription.</text>
</comment>
<comment type="similarity">
    <text evidence="14">Belongs to the histone H2B family.</text>
</comment>
<protein>
    <recommendedName>
        <fullName>Histone H2B type 1-K</fullName>
        <shortName>H2B K</shortName>
    </recommendedName>
</protein>
<accession>Q2PFX4</accession>
<proteinExistence type="evidence at transcript level"/>
<sequence>MPEPAKSAPAPKKGSKKAVTKAQKKDGKKRKRSRKESYSVYVYKVLKRVHPDTGISSKAMGIMNSFVNDIFERIAGEASRLAHYNKRSTITSREIQTAVRLLLPGELAKHAVSEGTKAVTKYTSAK</sequence>